<keyword id="KW-0472">Membrane</keyword>
<keyword id="KW-1267">Proteomics identification</keyword>
<keyword id="KW-1185">Reference proteome</keyword>
<keyword id="KW-0812">Transmembrane</keyword>
<keyword id="KW-1133">Transmembrane helix</keyword>
<accession>A8MZ97</accession>
<accession>C9JP62</accession>
<feature type="chain" id="PRO_0000343566" description="Uncharacterized protein C2orf74">
    <location>
        <begin position="1"/>
        <end position="187"/>
    </location>
</feature>
<feature type="transmembrane region" description="Helical" evidence="1">
    <location>
        <begin position="8"/>
        <end position="28"/>
    </location>
</feature>
<feature type="region of interest" description="Disordered" evidence="2">
    <location>
        <begin position="99"/>
        <end position="153"/>
    </location>
</feature>
<feature type="compositionally biased region" description="Polar residues" evidence="2">
    <location>
        <begin position="137"/>
        <end position="149"/>
    </location>
</feature>
<comment type="interaction">
    <interactant intactId="EBI-3943880">
        <id>A8MZ97</id>
    </interactant>
    <interactant intactId="EBI-10226799">
        <id>Q0VAQ4</id>
        <label>SMAGP</label>
    </interactant>
    <organismsDiffer>false</organismsDiffer>
    <experiments>3</experiments>
</comment>
<comment type="subcellular location">
    <subcellularLocation>
        <location evidence="3">Membrane</location>
        <topology evidence="3">Single-pass membrane protein</topology>
    </subcellularLocation>
</comment>
<dbReference type="EMBL" id="AC016747">
    <property type="status" value="NOT_ANNOTATED_CDS"/>
    <property type="molecule type" value="Genomic_DNA"/>
</dbReference>
<dbReference type="CCDS" id="CCDS46297.1"/>
<dbReference type="RefSeq" id="NP_001137431.2">
    <property type="nucleotide sequence ID" value="NM_001143959.4"/>
</dbReference>
<dbReference type="SMR" id="A8MZ97"/>
<dbReference type="BioGRID" id="130940">
    <property type="interactions" value="4"/>
</dbReference>
<dbReference type="FunCoup" id="A8MZ97">
    <property type="interactions" value="2"/>
</dbReference>
<dbReference type="IntAct" id="A8MZ97">
    <property type="interactions" value="2"/>
</dbReference>
<dbReference type="STRING" id="9606.ENSP00000398725"/>
<dbReference type="iPTMnet" id="A8MZ97"/>
<dbReference type="PhosphoSitePlus" id="A8MZ97"/>
<dbReference type="BioMuta" id="C2orf74"/>
<dbReference type="jPOST" id="A8MZ97"/>
<dbReference type="MassIVE" id="A8MZ97"/>
<dbReference type="PaxDb" id="9606-ENSP00000402915"/>
<dbReference type="PeptideAtlas" id="A8MZ97"/>
<dbReference type="ProteomicsDB" id="2463"/>
<dbReference type="Antibodypedia" id="48106">
    <property type="antibodies" value="18 antibodies from 12 providers"/>
</dbReference>
<dbReference type="DNASU" id="339804"/>
<dbReference type="Ensembl" id="ENST00000432605.3">
    <property type="protein sequence ID" value="ENSP00000402915.2"/>
    <property type="gene ID" value="ENSG00000237651.8"/>
</dbReference>
<dbReference type="GeneID" id="339804"/>
<dbReference type="MANE-Select" id="ENST00000432605.3">
    <property type="protein sequence ID" value="ENSP00000402915.2"/>
    <property type="RefSeq nucleotide sequence ID" value="NM_001143959.4"/>
    <property type="RefSeq protein sequence ID" value="NP_001137431.2"/>
</dbReference>
<dbReference type="UCSC" id="uc010ypm.1">
    <property type="organism name" value="human"/>
</dbReference>
<dbReference type="AGR" id="HGNC:34439"/>
<dbReference type="DisGeNET" id="339804"/>
<dbReference type="GeneCards" id="C2orf74"/>
<dbReference type="HGNC" id="HGNC:34439">
    <property type="gene designation" value="C2orf74"/>
</dbReference>
<dbReference type="HPA" id="ENSG00000237651">
    <property type="expression patterns" value="Low tissue specificity"/>
</dbReference>
<dbReference type="neXtProt" id="NX_A8MZ97"/>
<dbReference type="OpenTargets" id="ENSG00000237651"/>
<dbReference type="PharmGKB" id="PA162379547"/>
<dbReference type="VEuPathDB" id="HostDB:ENSG00000237651"/>
<dbReference type="eggNOG" id="ENOG502TF2B">
    <property type="taxonomic scope" value="Eukaryota"/>
</dbReference>
<dbReference type="GeneTree" id="ENSGT00390000004911"/>
<dbReference type="HOGENOM" id="CLU_1351712_0_0_1"/>
<dbReference type="InParanoid" id="A8MZ97"/>
<dbReference type="OrthoDB" id="9836846at2759"/>
<dbReference type="PAN-GO" id="A8MZ97">
    <property type="GO annotations" value="0 GO annotations based on evolutionary models"/>
</dbReference>
<dbReference type="PhylomeDB" id="A8MZ97"/>
<dbReference type="PathwayCommons" id="A8MZ97"/>
<dbReference type="SignaLink" id="A8MZ97"/>
<dbReference type="BioGRID-ORCS" id="339804">
    <property type="hits" value="6 hits in 223 CRISPR screens"/>
</dbReference>
<dbReference type="ChiTaRS" id="C2orf74">
    <property type="organism name" value="human"/>
</dbReference>
<dbReference type="GenomeRNAi" id="339804"/>
<dbReference type="Pharos" id="A8MZ97">
    <property type="development level" value="Tdark"/>
</dbReference>
<dbReference type="PRO" id="PR:A8MZ97"/>
<dbReference type="Proteomes" id="UP000005640">
    <property type="component" value="Chromosome 2"/>
</dbReference>
<dbReference type="RNAct" id="A8MZ97">
    <property type="molecule type" value="protein"/>
</dbReference>
<dbReference type="Bgee" id="ENSG00000237651">
    <property type="expression patterns" value="Expressed in nucleus accumbens and 100 other cell types or tissues"/>
</dbReference>
<dbReference type="ExpressionAtlas" id="A8MZ97">
    <property type="expression patterns" value="baseline and differential"/>
</dbReference>
<dbReference type="GO" id="GO:0016020">
    <property type="term" value="C:membrane"/>
    <property type="evidence" value="ECO:0007669"/>
    <property type="project" value="UniProtKB-SubCell"/>
</dbReference>
<dbReference type="InterPro" id="IPR027813">
    <property type="entry name" value="DUF4642"/>
</dbReference>
<dbReference type="PANTHER" id="PTHR37882">
    <property type="entry name" value="HYPOTHETICAL PROTEIN LOC690352"/>
    <property type="match status" value="1"/>
</dbReference>
<dbReference type="Pfam" id="PF15484">
    <property type="entry name" value="DUF4642"/>
    <property type="match status" value="1"/>
</dbReference>
<protein>
    <recommendedName>
        <fullName>Uncharacterized protein C2orf74</fullName>
    </recommendedName>
</protein>
<proteinExistence type="evidence at protein level"/>
<reference key="1">
    <citation type="journal article" date="2005" name="Nature">
        <title>Generation and annotation of the DNA sequences of human chromosomes 2 and 4.</title>
        <authorList>
            <person name="Hillier L.W."/>
            <person name="Graves T.A."/>
            <person name="Fulton R.S."/>
            <person name="Fulton L.A."/>
            <person name="Pepin K.H."/>
            <person name="Minx P."/>
            <person name="Wagner-McPherson C."/>
            <person name="Layman D."/>
            <person name="Wylie K."/>
            <person name="Sekhon M."/>
            <person name="Becker M.C."/>
            <person name="Fewell G.A."/>
            <person name="Delehaunty K.D."/>
            <person name="Miner T.L."/>
            <person name="Nash W.E."/>
            <person name="Kremitzki C."/>
            <person name="Oddy L."/>
            <person name="Du H."/>
            <person name="Sun H."/>
            <person name="Bradshaw-Cordum H."/>
            <person name="Ali J."/>
            <person name="Carter J."/>
            <person name="Cordes M."/>
            <person name="Harris A."/>
            <person name="Isak A."/>
            <person name="van Brunt A."/>
            <person name="Nguyen C."/>
            <person name="Du F."/>
            <person name="Courtney L."/>
            <person name="Kalicki J."/>
            <person name="Ozersky P."/>
            <person name="Abbott S."/>
            <person name="Armstrong J."/>
            <person name="Belter E.A."/>
            <person name="Caruso L."/>
            <person name="Cedroni M."/>
            <person name="Cotton M."/>
            <person name="Davidson T."/>
            <person name="Desai A."/>
            <person name="Elliott G."/>
            <person name="Erb T."/>
            <person name="Fronick C."/>
            <person name="Gaige T."/>
            <person name="Haakenson W."/>
            <person name="Haglund K."/>
            <person name="Holmes A."/>
            <person name="Harkins R."/>
            <person name="Kim K."/>
            <person name="Kruchowski S.S."/>
            <person name="Strong C.M."/>
            <person name="Grewal N."/>
            <person name="Goyea E."/>
            <person name="Hou S."/>
            <person name="Levy A."/>
            <person name="Martinka S."/>
            <person name="Mead K."/>
            <person name="McLellan M.D."/>
            <person name="Meyer R."/>
            <person name="Randall-Maher J."/>
            <person name="Tomlinson C."/>
            <person name="Dauphin-Kohlberg S."/>
            <person name="Kozlowicz-Reilly A."/>
            <person name="Shah N."/>
            <person name="Swearengen-Shahid S."/>
            <person name="Snider J."/>
            <person name="Strong J.T."/>
            <person name="Thompson J."/>
            <person name="Yoakum M."/>
            <person name="Leonard S."/>
            <person name="Pearman C."/>
            <person name="Trani L."/>
            <person name="Radionenko M."/>
            <person name="Waligorski J.E."/>
            <person name="Wang C."/>
            <person name="Rock S.M."/>
            <person name="Tin-Wollam A.-M."/>
            <person name="Maupin R."/>
            <person name="Latreille P."/>
            <person name="Wendl M.C."/>
            <person name="Yang S.-P."/>
            <person name="Pohl C."/>
            <person name="Wallis J.W."/>
            <person name="Spieth J."/>
            <person name="Bieri T.A."/>
            <person name="Berkowicz N."/>
            <person name="Nelson J.O."/>
            <person name="Osborne J."/>
            <person name="Ding L."/>
            <person name="Meyer R."/>
            <person name="Sabo A."/>
            <person name="Shotland Y."/>
            <person name="Sinha P."/>
            <person name="Wohldmann P.E."/>
            <person name="Cook L.L."/>
            <person name="Hickenbotham M.T."/>
            <person name="Eldred J."/>
            <person name="Williams D."/>
            <person name="Jones T.A."/>
            <person name="She X."/>
            <person name="Ciccarelli F.D."/>
            <person name="Izaurralde E."/>
            <person name="Taylor J."/>
            <person name="Schmutz J."/>
            <person name="Myers R.M."/>
            <person name="Cox D.R."/>
            <person name="Huang X."/>
            <person name="McPherson J.D."/>
            <person name="Mardis E.R."/>
            <person name="Clifton S.W."/>
            <person name="Warren W.C."/>
            <person name="Chinwalla A.T."/>
            <person name="Eddy S.R."/>
            <person name="Marra M.A."/>
            <person name="Ovcharenko I."/>
            <person name="Furey T.S."/>
            <person name="Miller W."/>
            <person name="Eichler E.E."/>
            <person name="Bork P."/>
            <person name="Suyama M."/>
            <person name="Torrents D."/>
            <person name="Waterston R.H."/>
            <person name="Wilson R.K."/>
        </authorList>
    </citation>
    <scope>NUCLEOTIDE SEQUENCE [LARGE SCALE GENOMIC DNA]</scope>
</reference>
<evidence type="ECO:0000255" key="1"/>
<evidence type="ECO:0000256" key="2">
    <source>
        <dbReference type="SAM" id="MobiDB-lite"/>
    </source>
</evidence>
<evidence type="ECO:0000305" key="3"/>
<organism>
    <name type="scientific">Homo sapiens</name>
    <name type="common">Human</name>
    <dbReference type="NCBI Taxonomy" id="9606"/>
    <lineage>
        <taxon>Eukaryota</taxon>
        <taxon>Metazoa</taxon>
        <taxon>Chordata</taxon>
        <taxon>Craniata</taxon>
        <taxon>Vertebrata</taxon>
        <taxon>Euteleostomi</taxon>
        <taxon>Mammalia</taxon>
        <taxon>Eutheria</taxon>
        <taxon>Euarchontoglires</taxon>
        <taxon>Primates</taxon>
        <taxon>Haplorrhini</taxon>
        <taxon>Catarrhini</taxon>
        <taxon>Hominidae</taxon>
        <taxon>Homo</taxon>
    </lineage>
</organism>
<name>CB074_HUMAN</name>
<gene>
    <name type="primary">C2orf74</name>
</gene>
<sequence>MSFETTAITFFIILLICLICILLLLVVFLYKCFQGRKGKETKKVPCTDANGGVDCAAAKVVTSNPEDHERILMQVMNLNVPMRPGILVQRQSKEVLATPLENRRDMEAEEENQINEKQEPENAGETGQEEDDGLQKIHTSVTRTPSVVESQKRPLKGVTFSREVIVVDLGNEYPTPRSYTREHKERK</sequence>